<name>TTCA_LEGPA</name>
<reference key="1">
    <citation type="journal article" date="2004" name="Nat. Genet.">
        <title>Evidence in the Legionella pneumophila genome for exploitation of host cell functions and high genome plasticity.</title>
        <authorList>
            <person name="Cazalet C."/>
            <person name="Rusniok C."/>
            <person name="Brueggemann H."/>
            <person name="Zidane N."/>
            <person name="Magnier A."/>
            <person name="Ma L."/>
            <person name="Tichit M."/>
            <person name="Jarraud S."/>
            <person name="Bouchier C."/>
            <person name="Vandenesch F."/>
            <person name="Kunst F."/>
            <person name="Etienne J."/>
            <person name="Glaser P."/>
            <person name="Buchrieser C."/>
        </authorList>
    </citation>
    <scope>NUCLEOTIDE SEQUENCE [LARGE SCALE GENOMIC DNA]</scope>
    <source>
        <strain>Paris</strain>
    </source>
</reference>
<gene>
    <name evidence="1" type="primary">ttcA</name>
    <name type="ordered locus">lpp0753</name>
</gene>
<accession>Q5X752</accession>
<keyword id="KW-0004">4Fe-4S</keyword>
<keyword id="KW-0067">ATP-binding</keyword>
<keyword id="KW-0963">Cytoplasm</keyword>
<keyword id="KW-0408">Iron</keyword>
<keyword id="KW-0411">Iron-sulfur</keyword>
<keyword id="KW-0460">Magnesium</keyword>
<keyword id="KW-0479">Metal-binding</keyword>
<keyword id="KW-0547">Nucleotide-binding</keyword>
<keyword id="KW-0694">RNA-binding</keyword>
<keyword id="KW-0808">Transferase</keyword>
<keyword id="KW-0819">tRNA processing</keyword>
<keyword id="KW-0820">tRNA-binding</keyword>
<dbReference type="EC" id="2.8.1.-" evidence="1"/>
<dbReference type="EMBL" id="CR628336">
    <property type="protein sequence ID" value="CAH11901.1"/>
    <property type="molecule type" value="Genomic_DNA"/>
</dbReference>
<dbReference type="RefSeq" id="WP_011213280.1">
    <property type="nucleotide sequence ID" value="NC_006368.1"/>
</dbReference>
<dbReference type="SMR" id="Q5X752"/>
<dbReference type="KEGG" id="lpp:lpp0753"/>
<dbReference type="LegioList" id="lpp0753"/>
<dbReference type="HOGENOM" id="CLU_026481_0_0_6"/>
<dbReference type="GO" id="GO:0005737">
    <property type="term" value="C:cytoplasm"/>
    <property type="evidence" value="ECO:0007669"/>
    <property type="project" value="UniProtKB-SubCell"/>
</dbReference>
<dbReference type="GO" id="GO:0051539">
    <property type="term" value="F:4 iron, 4 sulfur cluster binding"/>
    <property type="evidence" value="ECO:0007669"/>
    <property type="project" value="UniProtKB-UniRule"/>
</dbReference>
<dbReference type="GO" id="GO:0005524">
    <property type="term" value="F:ATP binding"/>
    <property type="evidence" value="ECO:0007669"/>
    <property type="project" value="UniProtKB-UniRule"/>
</dbReference>
<dbReference type="GO" id="GO:0000287">
    <property type="term" value="F:magnesium ion binding"/>
    <property type="evidence" value="ECO:0007669"/>
    <property type="project" value="UniProtKB-UniRule"/>
</dbReference>
<dbReference type="GO" id="GO:0016783">
    <property type="term" value="F:sulfurtransferase activity"/>
    <property type="evidence" value="ECO:0007669"/>
    <property type="project" value="UniProtKB-UniRule"/>
</dbReference>
<dbReference type="GO" id="GO:0000049">
    <property type="term" value="F:tRNA binding"/>
    <property type="evidence" value="ECO:0007669"/>
    <property type="project" value="UniProtKB-KW"/>
</dbReference>
<dbReference type="GO" id="GO:0034227">
    <property type="term" value="P:tRNA thio-modification"/>
    <property type="evidence" value="ECO:0007669"/>
    <property type="project" value="UniProtKB-UniRule"/>
</dbReference>
<dbReference type="CDD" id="cd24138">
    <property type="entry name" value="TtcA-like"/>
    <property type="match status" value="1"/>
</dbReference>
<dbReference type="Gene3D" id="3.40.50.620">
    <property type="entry name" value="HUPs"/>
    <property type="match status" value="1"/>
</dbReference>
<dbReference type="HAMAP" id="MF_01850">
    <property type="entry name" value="TtcA"/>
    <property type="match status" value="1"/>
</dbReference>
<dbReference type="InterPro" id="IPR014729">
    <property type="entry name" value="Rossmann-like_a/b/a_fold"/>
</dbReference>
<dbReference type="InterPro" id="IPR011063">
    <property type="entry name" value="TilS/TtcA_N"/>
</dbReference>
<dbReference type="InterPro" id="IPR012089">
    <property type="entry name" value="tRNA_Cyd_32_2_STrfase"/>
</dbReference>
<dbReference type="InterPro" id="IPR035107">
    <property type="entry name" value="tRNA_thiolation_TtcA_Ctu1"/>
</dbReference>
<dbReference type="NCBIfam" id="NF007972">
    <property type="entry name" value="PRK10696.1"/>
    <property type="match status" value="1"/>
</dbReference>
<dbReference type="PANTHER" id="PTHR43686:SF1">
    <property type="entry name" value="AMINOTRAN_5 DOMAIN-CONTAINING PROTEIN"/>
    <property type="match status" value="1"/>
</dbReference>
<dbReference type="PANTHER" id="PTHR43686">
    <property type="entry name" value="SULFURTRANSFERASE-RELATED"/>
    <property type="match status" value="1"/>
</dbReference>
<dbReference type="Pfam" id="PF01171">
    <property type="entry name" value="ATP_bind_3"/>
    <property type="match status" value="1"/>
</dbReference>
<dbReference type="PIRSF" id="PIRSF004976">
    <property type="entry name" value="ATPase_YdaO"/>
    <property type="match status" value="1"/>
</dbReference>
<dbReference type="SUPFAM" id="SSF52402">
    <property type="entry name" value="Adenine nucleotide alpha hydrolases-like"/>
    <property type="match status" value="1"/>
</dbReference>
<feature type="chain" id="PRO_0000348760" description="tRNA-cytidine(32) 2-sulfurtransferase">
    <location>
        <begin position="1"/>
        <end position="283"/>
    </location>
</feature>
<feature type="short sequence motif" description="PP-loop motif" evidence="1">
    <location>
        <begin position="37"/>
        <end position="42"/>
    </location>
</feature>
<feature type="binding site" evidence="1">
    <location>
        <position position="112"/>
    </location>
    <ligand>
        <name>[4Fe-4S] cluster</name>
        <dbReference type="ChEBI" id="CHEBI:49883"/>
    </ligand>
</feature>
<feature type="binding site" evidence="1">
    <location>
        <position position="115"/>
    </location>
    <ligand>
        <name>[4Fe-4S] cluster</name>
        <dbReference type="ChEBI" id="CHEBI:49883"/>
    </ligand>
</feature>
<feature type="binding site" evidence="1">
    <location>
        <position position="203"/>
    </location>
    <ligand>
        <name>[4Fe-4S] cluster</name>
        <dbReference type="ChEBI" id="CHEBI:49883"/>
    </ligand>
</feature>
<evidence type="ECO:0000255" key="1">
    <source>
        <dbReference type="HAMAP-Rule" id="MF_01850"/>
    </source>
</evidence>
<sequence>MSSNPSSVEKKLLHYTGKAIADFNMIQRGDRVMVCLSGGKDSFTLLTILNQLRIKSGNKFEIFAFTLDQAQPGWNDACLRQWLAEKSIPHEILTRDTYSIVKEKIPEGKTYCSLCSRLRRGIIYRYAEENGFNKIALGHHRDDLIRTLMMSILYNGDIRSMPPKLLSDNKKHIVIRPLCYVQEKDIITFASEQAFPIIPCNLCGSQENLMRKKVASLIDQLAIENPKVPSNMLHALQSLKPSQLMDQNFWNFKNLEDGLETAQSIQCEEVFNAQEFEIEDEKI</sequence>
<organism>
    <name type="scientific">Legionella pneumophila (strain Paris)</name>
    <dbReference type="NCBI Taxonomy" id="297246"/>
    <lineage>
        <taxon>Bacteria</taxon>
        <taxon>Pseudomonadati</taxon>
        <taxon>Pseudomonadota</taxon>
        <taxon>Gammaproteobacteria</taxon>
        <taxon>Legionellales</taxon>
        <taxon>Legionellaceae</taxon>
        <taxon>Legionella</taxon>
    </lineage>
</organism>
<proteinExistence type="inferred from homology"/>
<comment type="function">
    <text evidence="1">Catalyzes the ATP-dependent 2-thiolation of cytidine in position 32 of tRNA, to form 2-thiocytidine (s(2)C32). The sulfur atoms are provided by the cysteine/cysteine desulfurase (IscS) system.</text>
</comment>
<comment type="catalytic activity">
    <reaction evidence="1">
        <text>cytidine(32) in tRNA + S-sulfanyl-L-cysteinyl-[cysteine desulfurase] + AH2 + ATP = 2-thiocytidine(32) in tRNA + L-cysteinyl-[cysteine desulfurase] + A + AMP + diphosphate + H(+)</text>
        <dbReference type="Rhea" id="RHEA:57048"/>
        <dbReference type="Rhea" id="RHEA-COMP:10288"/>
        <dbReference type="Rhea" id="RHEA-COMP:12157"/>
        <dbReference type="Rhea" id="RHEA-COMP:12158"/>
        <dbReference type="Rhea" id="RHEA-COMP:14821"/>
        <dbReference type="ChEBI" id="CHEBI:13193"/>
        <dbReference type="ChEBI" id="CHEBI:15378"/>
        <dbReference type="ChEBI" id="CHEBI:17499"/>
        <dbReference type="ChEBI" id="CHEBI:29950"/>
        <dbReference type="ChEBI" id="CHEBI:30616"/>
        <dbReference type="ChEBI" id="CHEBI:33019"/>
        <dbReference type="ChEBI" id="CHEBI:61963"/>
        <dbReference type="ChEBI" id="CHEBI:82748"/>
        <dbReference type="ChEBI" id="CHEBI:141453"/>
        <dbReference type="ChEBI" id="CHEBI:456215"/>
    </reaction>
    <physiologicalReaction direction="left-to-right" evidence="1">
        <dbReference type="Rhea" id="RHEA:57049"/>
    </physiologicalReaction>
</comment>
<comment type="cofactor">
    <cofactor evidence="1">
        <name>Mg(2+)</name>
        <dbReference type="ChEBI" id="CHEBI:18420"/>
    </cofactor>
</comment>
<comment type="cofactor">
    <cofactor evidence="1">
        <name>[4Fe-4S] cluster</name>
        <dbReference type="ChEBI" id="CHEBI:49883"/>
    </cofactor>
    <text evidence="1">Binds 1 [4Fe-4S] cluster per subunit. The cluster is chelated by three Cys residues, the fourth Fe has a free coordination site that may bind a sulfur atom transferred from the persulfide of IscS.</text>
</comment>
<comment type="pathway">
    <text evidence="1">tRNA modification.</text>
</comment>
<comment type="subunit">
    <text evidence="1">Homodimer.</text>
</comment>
<comment type="subcellular location">
    <subcellularLocation>
        <location evidence="1">Cytoplasm</location>
    </subcellularLocation>
</comment>
<comment type="miscellaneous">
    <text evidence="1">The thiolation reaction likely consists of two steps: a first activation step by ATP to form an adenylated intermediate of the target base of tRNA, and a second nucleophilic substitution step of the sulfur (S) atom supplied by the hydrosulfide attached to the Fe-S cluster.</text>
</comment>
<comment type="similarity">
    <text evidence="1">Belongs to the TtcA family.</text>
</comment>
<protein>
    <recommendedName>
        <fullName evidence="1">tRNA-cytidine(32) 2-sulfurtransferase</fullName>
        <ecNumber evidence="1">2.8.1.-</ecNumber>
    </recommendedName>
    <alternativeName>
        <fullName evidence="1">Two-thiocytidine biosynthesis protein A</fullName>
    </alternativeName>
    <alternativeName>
        <fullName evidence="1">tRNA 2-thiocytidine biosynthesis protein TtcA</fullName>
    </alternativeName>
</protein>